<protein>
    <recommendedName>
        <fullName evidence="1">Tetraacyldisaccharide 4'-kinase</fullName>
        <ecNumber evidence="1">2.7.1.130</ecNumber>
    </recommendedName>
    <alternativeName>
        <fullName evidence="1">Lipid A 4'-kinase</fullName>
    </alternativeName>
</protein>
<reference key="1">
    <citation type="journal article" date="2004" name="Nat. Biotechnol.">
        <title>The genome sequence of the capnophilic rumen bacterium Mannheimia succiniciproducens.</title>
        <authorList>
            <person name="Hong S.H."/>
            <person name="Kim J.S."/>
            <person name="Lee S.Y."/>
            <person name="In Y.H."/>
            <person name="Choi S.S."/>
            <person name="Rih J.-K."/>
            <person name="Kim C.H."/>
            <person name="Jeong H."/>
            <person name="Hur C.G."/>
            <person name="Kim J.J."/>
        </authorList>
    </citation>
    <scope>NUCLEOTIDE SEQUENCE [LARGE SCALE GENOMIC DNA]</scope>
    <source>
        <strain>KCTC 0769BP / MBEL55E</strain>
    </source>
</reference>
<proteinExistence type="inferred from homology"/>
<sequence length="325" mass="36595">MKFWYTKSWIAYLLLPFSFLFWLVSQCRRWLFQAGIIKSYRAPVPIVIVGNLSVGGNGKTPVVIWLVKALQQNGLRVGVISRGYGSQSAVYPLLVTEKTDPLEGGDEPVLIAQRTQVPVCISANRQQAIELLLQTQPCDVIVSDDGLQHYKLQRDFEIVVVDAQRGFGNGFVMPAGPLRELPSRLDSVDLVIANGKANRYSQTVMTLAADYAVNLVTKEKRLLTEFESGSAFAGIGNPQRFFTMLQGFGIQLKQTYEFQDHQKFSAELFAKFSKNEPHFMTEKDAVKCFPFARENWWYVPVEAKITGQSAVNFIENIVERVKNGQ</sequence>
<comment type="function">
    <text evidence="1">Transfers the gamma-phosphate of ATP to the 4'-position of a tetraacyldisaccharide 1-phosphate intermediate (termed DS-1-P) to form tetraacyldisaccharide 1,4'-bis-phosphate (lipid IVA).</text>
</comment>
<comment type="catalytic activity">
    <reaction evidence="1">
        <text>a lipid A disaccharide + ATP = a lipid IVA + ADP + H(+)</text>
        <dbReference type="Rhea" id="RHEA:67840"/>
        <dbReference type="ChEBI" id="CHEBI:15378"/>
        <dbReference type="ChEBI" id="CHEBI:30616"/>
        <dbReference type="ChEBI" id="CHEBI:176343"/>
        <dbReference type="ChEBI" id="CHEBI:176425"/>
        <dbReference type="ChEBI" id="CHEBI:456216"/>
        <dbReference type="EC" id="2.7.1.130"/>
    </reaction>
</comment>
<comment type="pathway">
    <text evidence="1">Glycolipid biosynthesis; lipid IV(A) biosynthesis; lipid IV(A) from (3R)-3-hydroxytetradecanoyl-[acyl-carrier-protein] and UDP-N-acetyl-alpha-D-glucosamine: step 6/6.</text>
</comment>
<comment type="similarity">
    <text evidence="1">Belongs to the LpxK family.</text>
</comment>
<comment type="sequence caution" evidence="2">
    <conflict type="erroneous initiation">
        <sequence resource="EMBL-CDS" id="AAU37540"/>
    </conflict>
</comment>
<gene>
    <name evidence="1" type="primary">lpxK</name>
    <name type="ordered locus">MS0933</name>
</gene>
<dbReference type="EC" id="2.7.1.130" evidence="1"/>
<dbReference type="EMBL" id="AE016827">
    <property type="protein sequence ID" value="AAU37540.1"/>
    <property type="status" value="ALT_INIT"/>
    <property type="molecule type" value="Genomic_DNA"/>
</dbReference>
<dbReference type="RefSeq" id="WP_041639671.1">
    <property type="nucleotide sequence ID" value="NC_006300.1"/>
</dbReference>
<dbReference type="SMR" id="Q65U20"/>
<dbReference type="STRING" id="221988.MS0933"/>
<dbReference type="KEGG" id="msu:MS0933"/>
<dbReference type="eggNOG" id="COG1663">
    <property type="taxonomic scope" value="Bacteria"/>
</dbReference>
<dbReference type="HOGENOM" id="CLU_038816_2_0_6"/>
<dbReference type="OrthoDB" id="9766423at2"/>
<dbReference type="UniPathway" id="UPA00359">
    <property type="reaction ID" value="UER00482"/>
</dbReference>
<dbReference type="Proteomes" id="UP000000607">
    <property type="component" value="Chromosome"/>
</dbReference>
<dbReference type="GO" id="GO:0005886">
    <property type="term" value="C:plasma membrane"/>
    <property type="evidence" value="ECO:0007669"/>
    <property type="project" value="TreeGrafter"/>
</dbReference>
<dbReference type="GO" id="GO:0005524">
    <property type="term" value="F:ATP binding"/>
    <property type="evidence" value="ECO:0007669"/>
    <property type="project" value="UniProtKB-UniRule"/>
</dbReference>
<dbReference type="GO" id="GO:0009029">
    <property type="term" value="F:tetraacyldisaccharide 4'-kinase activity"/>
    <property type="evidence" value="ECO:0007669"/>
    <property type="project" value="UniProtKB-UniRule"/>
</dbReference>
<dbReference type="GO" id="GO:0009245">
    <property type="term" value="P:lipid A biosynthetic process"/>
    <property type="evidence" value="ECO:0007669"/>
    <property type="project" value="UniProtKB-UniRule"/>
</dbReference>
<dbReference type="GO" id="GO:0009244">
    <property type="term" value="P:lipopolysaccharide core region biosynthetic process"/>
    <property type="evidence" value="ECO:0007669"/>
    <property type="project" value="TreeGrafter"/>
</dbReference>
<dbReference type="HAMAP" id="MF_00409">
    <property type="entry name" value="LpxK"/>
    <property type="match status" value="1"/>
</dbReference>
<dbReference type="InterPro" id="IPR003758">
    <property type="entry name" value="LpxK"/>
</dbReference>
<dbReference type="InterPro" id="IPR027417">
    <property type="entry name" value="P-loop_NTPase"/>
</dbReference>
<dbReference type="NCBIfam" id="TIGR00682">
    <property type="entry name" value="lpxK"/>
    <property type="match status" value="1"/>
</dbReference>
<dbReference type="PANTHER" id="PTHR42724">
    <property type="entry name" value="TETRAACYLDISACCHARIDE 4'-KINASE"/>
    <property type="match status" value="1"/>
</dbReference>
<dbReference type="PANTHER" id="PTHR42724:SF1">
    <property type="entry name" value="TETRAACYLDISACCHARIDE 4'-KINASE, MITOCHONDRIAL-RELATED"/>
    <property type="match status" value="1"/>
</dbReference>
<dbReference type="Pfam" id="PF02606">
    <property type="entry name" value="LpxK"/>
    <property type="match status" value="1"/>
</dbReference>
<dbReference type="SUPFAM" id="SSF52540">
    <property type="entry name" value="P-loop containing nucleoside triphosphate hydrolases"/>
    <property type="match status" value="1"/>
</dbReference>
<evidence type="ECO:0000255" key="1">
    <source>
        <dbReference type="HAMAP-Rule" id="MF_00409"/>
    </source>
</evidence>
<evidence type="ECO:0000305" key="2"/>
<feature type="chain" id="PRO_0000229963" description="Tetraacyldisaccharide 4'-kinase">
    <location>
        <begin position="1"/>
        <end position="325"/>
    </location>
</feature>
<feature type="binding site" evidence="1">
    <location>
        <begin position="53"/>
        <end position="60"/>
    </location>
    <ligand>
        <name>ATP</name>
        <dbReference type="ChEBI" id="CHEBI:30616"/>
    </ligand>
</feature>
<name>LPXK_MANSM</name>
<organism>
    <name type="scientific">Mannheimia succiniciproducens (strain KCTC 0769BP / MBEL55E)</name>
    <dbReference type="NCBI Taxonomy" id="221988"/>
    <lineage>
        <taxon>Bacteria</taxon>
        <taxon>Pseudomonadati</taxon>
        <taxon>Pseudomonadota</taxon>
        <taxon>Gammaproteobacteria</taxon>
        <taxon>Pasteurellales</taxon>
        <taxon>Pasteurellaceae</taxon>
        <taxon>Basfia</taxon>
    </lineage>
</organism>
<keyword id="KW-0067">ATP-binding</keyword>
<keyword id="KW-0418">Kinase</keyword>
<keyword id="KW-0441">Lipid A biosynthesis</keyword>
<keyword id="KW-0444">Lipid biosynthesis</keyword>
<keyword id="KW-0443">Lipid metabolism</keyword>
<keyword id="KW-0547">Nucleotide-binding</keyword>
<keyword id="KW-0808">Transferase</keyword>
<accession>Q65U20</accession>